<sequence>MTTVMKFGGTSVGSGERIRHVAKIVTKRKKEDDDVVVVVSAMSEVTNALVEISQQALDVRDIAKVGDFIKFIREKHYKAIEEAIKSEEIKEEVKKIIDSRIEELEKVLIGVAYLGELTPKSRDYILSFGERLSSPILSGAIRDLGEKSIALEGGEAGIITDNNFGSARVKRLEVKERLLPLLKEGIIPVVTGFIGTTEEGYITTLGRGGSDYSAALIGYGLDADIIEIWTDVSGVYTTDPRLVPTARRIPKLSYIEAMELAYFGAKVLHPRTIEPAMEKGIPILVKNTFEPESEGTLITNDMEMSDSIVKAISTIKNVALINIFGAGMVGVSGTAARIFKALGEEEVNVILISQGSSETNISLVVSEEDVDKALKALKREFGDFGKKSFLNNNLIRDVSVDKDVCVISVVGAGMRGAKGIAGKIFTAVSESGANIKMIAQGSSEVNISFVIDEKDLLNCVRKLHEKFIEKTNS</sequence>
<reference key="1">
    <citation type="journal article" date="1996" name="Science">
        <title>Complete genome sequence of the methanogenic archaeon, Methanococcus jannaschii.</title>
        <authorList>
            <person name="Bult C.J."/>
            <person name="White O."/>
            <person name="Olsen G.J."/>
            <person name="Zhou L."/>
            <person name="Fleischmann R.D."/>
            <person name="Sutton G.G."/>
            <person name="Blake J.A."/>
            <person name="FitzGerald L.M."/>
            <person name="Clayton R.A."/>
            <person name="Gocayne J.D."/>
            <person name="Kerlavage A.R."/>
            <person name="Dougherty B.A."/>
            <person name="Tomb J.-F."/>
            <person name="Adams M.D."/>
            <person name="Reich C.I."/>
            <person name="Overbeek R."/>
            <person name="Kirkness E.F."/>
            <person name="Weinstock K.G."/>
            <person name="Merrick J.M."/>
            <person name="Glodek A."/>
            <person name="Scott J.L."/>
            <person name="Geoghagen N.S.M."/>
            <person name="Weidman J.F."/>
            <person name="Fuhrmann J.L."/>
            <person name="Nguyen D."/>
            <person name="Utterback T.R."/>
            <person name="Kelley J.M."/>
            <person name="Peterson J.D."/>
            <person name="Sadow P.W."/>
            <person name="Hanna M.C."/>
            <person name="Cotton M.D."/>
            <person name="Roberts K.M."/>
            <person name="Hurst M.A."/>
            <person name="Kaine B.P."/>
            <person name="Borodovsky M."/>
            <person name="Klenk H.-P."/>
            <person name="Fraser C.M."/>
            <person name="Smith H.O."/>
            <person name="Woese C.R."/>
            <person name="Venter J.C."/>
        </authorList>
    </citation>
    <scope>NUCLEOTIDE SEQUENCE [LARGE SCALE GENOMIC DNA]</scope>
    <source>
        <strain>ATCC 43067 / DSM 2661 / JAL-1 / JCM 10045 / NBRC 100440</strain>
    </source>
</reference>
<accession>Q57991</accession>
<keyword id="KW-0002">3D-structure</keyword>
<keyword id="KW-0028">Amino-acid biosynthesis</keyword>
<keyword id="KW-0067">ATP-binding</keyword>
<keyword id="KW-0418">Kinase</keyword>
<keyword id="KW-0547">Nucleotide-binding</keyword>
<keyword id="KW-1185">Reference proteome</keyword>
<keyword id="KW-0677">Repeat</keyword>
<keyword id="KW-0791">Threonine biosynthesis</keyword>
<keyword id="KW-0808">Transferase</keyword>
<protein>
    <recommendedName>
        <fullName>Probable aspartokinase</fullName>
        <ecNumber>2.7.2.4</ecNumber>
    </recommendedName>
    <alternativeName>
        <fullName>Aspartate kinase</fullName>
    </alternativeName>
</protein>
<proteinExistence type="evidence at protein level"/>
<name>AK_METJA</name>
<comment type="catalytic activity">
    <reaction>
        <text>L-aspartate + ATP = 4-phospho-L-aspartate + ADP</text>
        <dbReference type="Rhea" id="RHEA:23776"/>
        <dbReference type="ChEBI" id="CHEBI:29991"/>
        <dbReference type="ChEBI" id="CHEBI:30616"/>
        <dbReference type="ChEBI" id="CHEBI:57535"/>
        <dbReference type="ChEBI" id="CHEBI:456216"/>
        <dbReference type="EC" id="2.7.2.4"/>
    </reaction>
</comment>
<comment type="pathway">
    <text>Amino-acid biosynthesis; L-lysine biosynthesis via DAP pathway; (S)-tetrahydrodipicolinate from L-aspartate: step 1/4.</text>
</comment>
<comment type="pathway">
    <text>Amino-acid biosynthesis; L-methionine biosynthesis via de novo pathway; L-homoserine from L-aspartate: step 1/3.</text>
</comment>
<comment type="pathway">
    <text>Amino-acid biosynthesis; L-threonine biosynthesis; L-threonine from L-aspartate: step 1/5.</text>
</comment>
<comment type="similarity">
    <text evidence="2">Belongs to the aspartokinase family.</text>
</comment>
<feature type="chain" id="PRO_0000066688" description="Probable aspartokinase">
    <location>
        <begin position="1"/>
        <end position="473"/>
    </location>
</feature>
<feature type="domain" description="ACT 1" evidence="1">
    <location>
        <begin position="323"/>
        <end position="392"/>
    </location>
</feature>
<feature type="domain" description="ACT 2" evidence="1">
    <location>
        <begin position="409"/>
        <end position="473"/>
    </location>
</feature>
<feature type="strand" evidence="4">
    <location>
        <begin position="3"/>
        <end position="7"/>
    </location>
</feature>
<feature type="turn" evidence="4">
    <location>
        <begin position="9"/>
        <end position="12"/>
    </location>
</feature>
<feature type="helix" evidence="4">
    <location>
        <begin position="15"/>
        <end position="29"/>
    </location>
</feature>
<feature type="strand" evidence="4">
    <location>
        <begin position="35"/>
        <end position="39"/>
    </location>
</feature>
<feature type="helix" evidence="4">
    <location>
        <begin position="45"/>
        <end position="58"/>
    </location>
</feature>
<feature type="helix" evidence="4">
    <location>
        <begin position="62"/>
        <end position="83"/>
    </location>
</feature>
<feature type="helix" evidence="4">
    <location>
        <begin position="87"/>
        <end position="114"/>
    </location>
</feature>
<feature type="helix" evidence="4">
    <location>
        <begin position="119"/>
        <end position="143"/>
    </location>
</feature>
<feature type="strand" evidence="4">
    <location>
        <begin position="148"/>
        <end position="151"/>
    </location>
</feature>
<feature type="helix" evidence="4">
    <location>
        <begin position="153"/>
        <end position="156"/>
    </location>
</feature>
<feature type="strand" evidence="4">
    <location>
        <begin position="158"/>
        <end position="160"/>
    </location>
</feature>
<feature type="strand" evidence="4">
    <location>
        <begin position="169"/>
        <end position="172"/>
    </location>
</feature>
<feature type="helix" evidence="4">
    <location>
        <begin position="174"/>
        <end position="183"/>
    </location>
</feature>
<feature type="strand" evidence="4">
    <location>
        <begin position="187"/>
        <end position="197"/>
    </location>
</feature>
<feature type="strand" evidence="4">
    <location>
        <begin position="202"/>
        <end position="204"/>
    </location>
</feature>
<feature type="turn" evidence="4">
    <location>
        <begin position="207"/>
        <end position="209"/>
    </location>
</feature>
<feature type="helix" evidence="4">
    <location>
        <begin position="210"/>
        <end position="220"/>
    </location>
</feature>
<feature type="strand" evidence="4">
    <location>
        <begin position="224"/>
        <end position="234"/>
    </location>
</feature>
<feature type="strand" evidence="4">
    <location>
        <begin position="236"/>
        <end position="238"/>
    </location>
</feature>
<feature type="turn" evidence="4">
    <location>
        <begin position="240"/>
        <end position="242"/>
    </location>
</feature>
<feature type="strand" evidence="4">
    <location>
        <begin position="250"/>
        <end position="253"/>
    </location>
</feature>
<feature type="helix" evidence="4">
    <location>
        <begin position="254"/>
        <end position="262"/>
    </location>
</feature>
<feature type="strand" evidence="5">
    <location>
        <begin position="265"/>
        <end position="267"/>
    </location>
</feature>
<feature type="helix" evidence="4">
    <location>
        <begin position="270"/>
        <end position="272"/>
    </location>
</feature>
<feature type="helix" evidence="4">
    <location>
        <begin position="273"/>
        <end position="279"/>
    </location>
</feature>
<feature type="strand" evidence="4">
    <location>
        <begin position="283"/>
        <end position="287"/>
    </location>
</feature>
<feature type="strand" evidence="4">
    <location>
        <begin position="296"/>
        <end position="300"/>
    </location>
</feature>
<feature type="strand" evidence="3">
    <location>
        <begin position="306"/>
        <end position="308"/>
    </location>
</feature>
<feature type="strand" evidence="4">
    <location>
        <begin position="311"/>
        <end position="325"/>
    </location>
</feature>
<feature type="strand" evidence="4">
    <location>
        <begin position="327"/>
        <end position="329"/>
    </location>
</feature>
<feature type="helix" evidence="4">
    <location>
        <begin position="331"/>
        <end position="344"/>
    </location>
</feature>
<feature type="strand" evidence="4">
    <location>
        <begin position="349"/>
        <end position="354"/>
    </location>
</feature>
<feature type="strand" evidence="4">
    <location>
        <begin position="361"/>
        <end position="366"/>
    </location>
</feature>
<feature type="helix" evidence="4">
    <location>
        <begin position="367"/>
        <end position="369"/>
    </location>
</feature>
<feature type="helix" evidence="4">
    <location>
        <begin position="370"/>
        <end position="381"/>
    </location>
</feature>
<feature type="strand" evidence="5">
    <location>
        <begin position="390"/>
        <end position="392"/>
    </location>
</feature>
<feature type="strand" evidence="4">
    <location>
        <begin position="395"/>
        <end position="410"/>
    </location>
</feature>
<feature type="turn" evidence="4">
    <location>
        <begin position="412"/>
        <end position="416"/>
    </location>
</feature>
<feature type="helix" evidence="4">
    <location>
        <begin position="420"/>
        <end position="431"/>
    </location>
</feature>
<feature type="strand" evidence="4">
    <location>
        <begin position="437"/>
        <end position="442"/>
    </location>
</feature>
<feature type="strand" evidence="4">
    <location>
        <begin position="444"/>
        <end position="452"/>
    </location>
</feature>
<feature type="helix" evidence="4">
    <location>
        <begin position="453"/>
        <end position="455"/>
    </location>
</feature>
<feature type="helix" evidence="4">
    <location>
        <begin position="456"/>
        <end position="467"/>
    </location>
</feature>
<gene>
    <name type="ordered locus">MJ0571</name>
</gene>
<evidence type="ECO:0000255" key="1">
    <source>
        <dbReference type="PROSITE-ProRule" id="PRU01007"/>
    </source>
</evidence>
<evidence type="ECO:0000305" key="2"/>
<evidence type="ECO:0007829" key="3">
    <source>
        <dbReference type="PDB" id="2HMF"/>
    </source>
</evidence>
<evidence type="ECO:0007829" key="4">
    <source>
        <dbReference type="PDB" id="3C1M"/>
    </source>
</evidence>
<evidence type="ECO:0007829" key="5">
    <source>
        <dbReference type="PDB" id="3C20"/>
    </source>
</evidence>
<dbReference type="EC" id="2.7.2.4"/>
<dbReference type="EMBL" id="L77117">
    <property type="protein sequence ID" value="AAB98565.1"/>
    <property type="molecule type" value="Genomic_DNA"/>
</dbReference>
<dbReference type="PIR" id="C64371">
    <property type="entry name" value="C64371"/>
</dbReference>
<dbReference type="RefSeq" id="WP_010870075.1">
    <property type="nucleotide sequence ID" value="NC_000909.1"/>
</dbReference>
<dbReference type="PDB" id="2HMF">
    <property type="method" value="X-ray"/>
    <property type="resolution" value="2.70 A"/>
    <property type="chains" value="A/B/C/D=2-470"/>
</dbReference>
<dbReference type="PDB" id="3C1M">
    <property type="method" value="X-ray"/>
    <property type="resolution" value="2.30 A"/>
    <property type="chains" value="A/B/C/D=1-473"/>
</dbReference>
<dbReference type="PDB" id="3C1N">
    <property type="method" value="X-ray"/>
    <property type="resolution" value="2.72 A"/>
    <property type="chains" value="A/B/C/D=1-473"/>
</dbReference>
<dbReference type="PDB" id="3C20">
    <property type="method" value="X-ray"/>
    <property type="resolution" value="2.70 A"/>
    <property type="chains" value="A/B=1-473"/>
</dbReference>
<dbReference type="PDBsum" id="2HMF"/>
<dbReference type="PDBsum" id="3C1M"/>
<dbReference type="PDBsum" id="3C1N"/>
<dbReference type="PDBsum" id="3C20"/>
<dbReference type="SMR" id="Q57991"/>
<dbReference type="FunCoup" id="Q57991">
    <property type="interactions" value="221"/>
</dbReference>
<dbReference type="STRING" id="243232.MJ_0571"/>
<dbReference type="PaxDb" id="243232-MJ_0571"/>
<dbReference type="EnsemblBacteria" id="AAB98565">
    <property type="protein sequence ID" value="AAB98565"/>
    <property type="gene ID" value="MJ_0571"/>
</dbReference>
<dbReference type="GeneID" id="1451436"/>
<dbReference type="KEGG" id="mja:MJ_0571"/>
<dbReference type="eggNOG" id="arCOG00861">
    <property type="taxonomic scope" value="Archaea"/>
</dbReference>
<dbReference type="HOGENOM" id="CLU_009116_6_0_2"/>
<dbReference type="InParanoid" id="Q57991"/>
<dbReference type="OrthoDB" id="8904at2157"/>
<dbReference type="PhylomeDB" id="Q57991"/>
<dbReference type="BioCyc" id="MetaCyc:MONOMER-20452"/>
<dbReference type="BRENDA" id="2.7.2.4">
    <property type="organism ID" value="3260"/>
</dbReference>
<dbReference type="UniPathway" id="UPA00034">
    <property type="reaction ID" value="UER00015"/>
</dbReference>
<dbReference type="UniPathway" id="UPA00050">
    <property type="reaction ID" value="UER00461"/>
</dbReference>
<dbReference type="UniPathway" id="UPA00051">
    <property type="reaction ID" value="UER00462"/>
</dbReference>
<dbReference type="EvolutionaryTrace" id="Q57991"/>
<dbReference type="PRO" id="PR:Q57991"/>
<dbReference type="Proteomes" id="UP000000805">
    <property type="component" value="Chromosome"/>
</dbReference>
<dbReference type="GO" id="GO:0005829">
    <property type="term" value="C:cytosol"/>
    <property type="evidence" value="ECO:0000318"/>
    <property type="project" value="GO_Central"/>
</dbReference>
<dbReference type="GO" id="GO:0004072">
    <property type="term" value="F:aspartate kinase activity"/>
    <property type="evidence" value="ECO:0000318"/>
    <property type="project" value="GO_Central"/>
</dbReference>
<dbReference type="GO" id="GO:0005524">
    <property type="term" value="F:ATP binding"/>
    <property type="evidence" value="ECO:0007669"/>
    <property type="project" value="UniProtKB-KW"/>
</dbReference>
<dbReference type="GO" id="GO:0009090">
    <property type="term" value="P:homoserine biosynthetic process"/>
    <property type="evidence" value="ECO:0000318"/>
    <property type="project" value="GO_Central"/>
</dbReference>
<dbReference type="GO" id="GO:0009089">
    <property type="term" value="P:lysine biosynthetic process via diaminopimelate"/>
    <property type="evidence" value="ECO:0007669"/>
    <property type="project" value="UniProtKB-UniPathway"/>
</dbReference>
<dbReference type="GO" id="GO:0009088">
    <property type="term" value="P:threonine biosynthetic process"/>
    <property type="evidence" value="ECO:0007669"/>
    <property type="project" value="UniProtKB-UniPathway"/>
</dbReference>
<dbReference type="CDD" id="cd04244">
    <property type="entry name" value="AAK_AK-LysC-like"/>
    <property type="match status" value="1"/>
</dbReference>
<dbReference type="CDD" id="cd04892">
    <property type="entry name" value="ACT_AK-like_2"/>
    <property type="match status" value="1"/>
</dbReference>
<dbReference type="CDD" id="cd04921">
    <property type="entry name" value="ACT_AKi-HSDH-ThrA-like_1"/>
    <property type="match status" value="1"/>
</dbReference>
<dbReference type="FunFam" id="3.40.1160.10:FF:000017">
    <property type="entry name" value="Bifunctional aspartokinase/homoserine dehydrogenase"/>
    <property type="match status" value="1"/>
</dbReference>
<dbReference type="FunFam" id="3.30.70.260:FF:000072">
    <property type="entry name" value="Probable aspartokinase"/>
    <property type="match status" value="1"/>
</dbReference>
<dbReference type="Gene3D" id="3.30.70.260">
    <property type="match status" value="1"/>
</dbReference>
<dbReference type="Gene3D" id="3.40.1160.10">
    <property type="entry name" value="Acetylglutamate kinase-like"/>
    <property type="match status" value="1"/>
</dbReference>
<dbReference type="Gene3D" id="3.30.2130.10">
    <property type="entry name" value="VC0802-like"/>
    <property type="match status" value="1"/>
</dbReference>
<dbReference type="InterPro" id="IPR036393">
    <property type="entry name" value="AceGlu_kinase-like_sf"/>
</dbReference>
<dbReference type="InterPro" id="IPR045865">
    <property type="entry name" value="ACT-like_dom_sf"/>
</dbReference>
<dbReference type="InterPro" id="IPR054352">
    <property type="entry name" value="ACT_Aspartokinase"/>
</dbReference>
<dbReference type="InterPro" id="IPR002912">
    <property type="entry name" value="ACT_dom"/>
</dbReference>
<dbReference type="InterPro" id="IPR041746">
    <property type="entry name" value="AK-LysC-like"/>
</dbReference>
<dbReference type="InterPro" id="IPR001048">
    <property type="entry name" value="Asp/Glu/Uridylate_kinase"/>
</dbReference>
<dbReference type="InterPro" id="IPR005260">
    <property type="entry name" value="Asp_kin_monofn"/>
</dbReference>
<dbReference type="InterPro" id="IPR001341">
    <property type="entry name" value="Asp_kinase"/>
</dbReference>
<dbReference type="InterPro" id="IPR018042">
    <property type="entry name" value="Aspartate_kinase_CS"/>
</dbReference>
<dbReference type="NCBIfam" id="TIGR00656">
    <property type="entry name" value="asp_kin_monofn"/>
    <property type="match status" value="1"/>
</dbReference>
<dbReference type="NCBIfam" id="TIGR00657">
    <property type="entry name" value="asp_kinases"/>
    <property type="match status" value="1"/>
</dbReference>
<dbReference type="NCBIfam" id="NF004938">
    <property type="entry name" value="PRK06291.1"/>
    <property type="match status" value="1"/>
</dbReference>
<dbReference type="PANTHER" id="PTHR21499">
    <property type="entry name" value="ASPARTATE KINASE"/>
    <property type="match status" value="1"/>
</dbReference>
<dbReference type="PANTHER" id="PTHR21499:SF59">
    <property type="entry name" value="ASPARTOKINASE"/>
    <property type="match status" value="1"/>
</dbReference>
<dbReference type="Pfam" id="PF00696">
    <property type="entry name" value="AA_kinase"/>
    <property type="match status" value="1"/>
</dbReference>
<dbReference type="Pfam" id="PF22468">
    <property type="entry name" value="ACT_9"/>
    <property type="match status" value="2"/>
</dbReference>
<dbReference type="PIRSF" id="PIRSF000726">
    <property type="entry name" value="Asp_kin"/>
    <property type="match status" value="1"/>
</dbReference>
<dbReference type="SUPFAM" id="SSF55021">
    <property type="entry name" value="ACT-like"/>
    <property type="match status" value="2"/>
</dbReference>
<dbReference type="SUPFAM" id="SSF53633">
    <property type="entry name" value="Carbamate kinase-like"/>
    <property type="match status" value="1"/>
</dbReference>
<dbReference type="PROSITE" id="PS51671">
    <property type="entry name" value="ACT"/>
    <property type="match status" value="2"/>
</dbReference>
<dbReference type="PROSITE" id="PS00324">
    <property type="entry name" value="ASPARTOKINASE"/>
    <property type="match status" value="1"/>
</dbReference>
<organism>
    <name type="scientific">Methanocaldococcus jannaschii (strain ATCC 43067 / DSM 2661 / JAL-1 / JCM 10045 / NBRC 100440)</name>
    <name type="common">Methanococcus jannaschii</name>
    <dbReference type="NCBI Taxonomy" id="243232"/>
    <lineage>
        <taxon>Archaea</taxon>
        <taxon>Methanobacteriati</taxon>
        <taxon>Methanobacteriota</taxon>
        <taxon>Methanomada group</taxon>
        <taxon>Methanococci</taxon>
        <taxon>Methanococcales</taxon>
        <taxon>Methanocaldococcaceae</taxon>
        <taxon>Methanocaldococcus</taxon>
    </lineage>
</organism>